<name>ACSM4_MOUSE</name>
<sequence>MKVLLHCQRLRFIWLAKPAGRHFHRDSQLWAPLTLDDFEAINRCEKPLPKNFNFAADVLDQWSLKEKSGERPANPALWWVNGKGDEVKWSFQELGSLSRKAANVLTKPCGLQRGDRVAVILPRIPEWWLINVACMRTGLVFMPGTIQLTRKDILYRLQASKAKCIVASEEVAPAVDSIVSECPSLKTKLLVSPHHWDGWLNFQELLQSASEEHNCVETGSQEPMAIYFTSGTTGSPKMAQHSQGSLGIGYTLCGRYWLDLTSSDIMWNMSDTGWIKAAIGSVFSTWLRGACVFVHRMAQFDTDIFLDTLTTYPITTLCSAPTVYRMLVQKDLKRYQFKRLRHCLTGGEPLNPEVLEQWKMQTGLELYEGYGQTEVGIICANRKGEAIKPGSMGKGVVPYDVQIIDENGNILPSGKEGEIALRLKSDRPFCFFSEYVDNPEKTDATIRRNFYVTGDRGVMDDDGYFWFVGRADDVIISSGYRIGPFEVESALIEHPAVVESAVVSSPDPIRGEVVKAFIVLAAPYKCSNREKLTAELQDHVKNSTAPYKYPRKVEFVQELPKTITGKIKRNVLRDQEWGRA</sequence>
<feature type="transit peptide" description="Mitochondrion" evidence="4">
    <location>
        <begin position="1"/>
        <end position="22"/>
    </location>
</feature>
<feature type="chain" id="PRO_0000306104" description="Acyl-coenzyme A synthetase ACSM4, mitochondrial">
    <location>
        <begin position="23"/>
        <end position="580"/>
    </location>
</feature>
<feature type="binding site" evidence="1">
    <location>
        <begin position="229"/>
        <end position="237"/>
    </location>
    <ligand>
        <name>ATP</name>
        <dbReference type="ChEBI" id="CHEBI:30616"/>
    </ligand>
</feature>
<feature type="binding site" evidence="1">
    <location>
        <begin position="368"/>
        <end position="373"/>
    </location>
    <ligand>
        <name>ATP</name>
        <dbReference type="ChEBI" id="CHEBI:30616"/>
    </ligand>
</feature>
<feature type="binding site" evidence="1">
    <location>
        <position position="455"/>
    </location>
    <ligand>
        <name>ATP</name>
        <dbReference type="ChEBI" id="CHEBI:30616"/>
    </ligand>
</feature>
<feature type="binding site" evidence="1">
    <location>
        <position position="470"/>
    </location>
    <ligand>
        <name>ATP</name>
        <dbReference type="ChEBI" id="CHEBI:30616"/>
    </ligand>
</feature>
<feature type="binding site" evidence="1">
    <location>
        <position position="566"/>
    </location>
    <ligand>
        <name>ATP</name>
        <dbReference type="ChEBI" id="CHEBI:30616"/>
    </ligand>
</feature>
<protein>
    <recommendedName>
        <fullName>Acyl-coenzyme A synthetase ACSM4, mitochondrial</fullName>
        <ecNumber evidence="3">6.2.1.2</ecNumber>
    </recommendedName>
    <alternativeName>
        <fullName evidence="3">Olfactory specific medium-chain acyl CoA synthetase</fullName>
        <shortName evidence="3">O-MACS</shortName>
    </alternativeName>
</protein>
<gene>
    <name type="primary">Acsm4</name>
    <name evidence="3" type="synonym">Omacs</name>
</gene>
<comment type="function">
    <text evidence="3">Catalyzes the activation of fatty acids by CoA to produce an acyl-CoA, the first step in fatty acid metabolism (By similarity). Capable of activating medium-chain fatty acids with a preference for C6-12 fatty acids (By similarity).</text>
</comment>
<comment type="catalytic activity">
    <reaction evidence="3">
        <text>a medium-chain fatty acid + ATP + CoA = a medium-chain fatty acyl-CoA + AMP + diphosphate</text>
        <dbReference type="Rhea" id="RHEA:48340"/>
        <dbReference type="ChEBI" id="CHEBI:30616"/>
        <dbReference type="ChEBI" id="CHEBI:33019"/>
        <dbReference type="ChEBI" id="CHEBI:57287"/>
        <dbReference type="ChEBI" id="CHEBI:59558"/>
        <dbReference type="ChEBI" id="CHEBI:90546"/>
        <dbReference type="ChEBI" id="CHEBI:456215"/>
        <dbReference type="EC" id="6.2.1.2"/>
    </reaction>
    <physiologicalReaction direction="left-to-right" evidence="3">
        <dbReference type="Rhea" id="RHEA:48341"/>
    </physiologicalReaction>
</comment>
<comment type="catalytic activity">
    <reaction evidence="3">
        <text>hexanoate + ATP + CoA = hexanoyl-CoA + AMP + diphosphate</text>
        <dbReference type="Rhea" id="RHEA:43740"/>
        <dbReference type="ChEBI" id="CHEBI:17120"/>
        <dbReference type="ChEBI" id="CHEBI:30616"/>
        <dbReference type="ChEBI" id="CHEBI:33019"/>
        <dbReference type="ChEBI" id="CHEBI:57287"/>
        <dbReference type="ChEBI" id="CHEBI:62620"/>
        <dbReference type="ChEBI" id="CHEBI:456215"/>
    </reaction>
    <physiologicalReaction direction="left-to-right" evidence="3">
        <dbReference type="Rhea" id="RHEA:43741"/>
    </physiologicalReaction>
</comment>
<comment type="catalytic activity">
    <reaction evidence="3">
        <text>octanoate + ATP + CoA = octanoyl-CoA + AMP + diphosphate</text>
        <dbReference type="Rhea" id="RHEA:33631"/>
        <dbReference type="ChEBI" id="CHEBI:25646"/>
        <dbReference type="ChEBI" id="CHEBI:30616"/>
        <dbReference type="ChEBI" id="CHEBI:33019"/>
        <dbReference type="ChEBI" id="CHEBI:57287"/>
        <dbReference type="ChEBI" id="CHEBI:57386"/>
        <dbReference type="ChEBI" id="CHEBI:456215"/>
    </reaction>
    <physiologicalReaction direction="left-to-right" evidence="3">
        <dbReference type="Rhea" id="RHEA:33632"/>
    </physiologicalReaction>
</comment>
<comment type="catalytic activity">
    <reaction evidence="3">
        <text>decanoate + ATP + CoA = decanoyl-CoA + AMP + diphosphate</text>
        <dbReference type="Rhea" id="RHEA:33627"/>
        <dbReference type="ChEBI" id="CHEBI:27689"/>
        <dbReference type="ChEBI" id="CHEBI:30616"/>
        <dbReference type="ChEBI" id="CHEBI:33019"/>
        <dbReference type="ChEBI" id="CHEBI:57287"/>
        <dbReference type="ChEBI" id="CHEBI:61430"/>
        <dbReference type="ChEBI" id="CHEBI:456215"/>
    </reaction>
    <physiologicalReaction direction="left-to-right" evidence="3">
        <dbReference type="Rhea" id="RHEA:33628"/>
    </physiologicalReaction>
</comment>
<comment type="catalytic activity">
    <reaction evidence="3">
        <text>dodecanoate + ATP + CoA = dodecanoyl-CoA + AMP + diphosphate</text>
        <dbReference type="Rhea" id="RHEA:33623"/>
        <dbReference type="ChEBI" id="CHEBI:18262"/>
        <dbReference type="ChEBI" id="CHEBI:30616"/>
        <dbReference type="ChEBI" id="CHEBI:33019"/>
        <dbReference type="ChEBI" id="CHEBI:57287"/>
        <dbReference type="ChEBI" id="CHEBI:57375"/>
        <dbReference type="ChEBI" id="CHEBI:456215"/>
    </reaction>
    <physiologicalReaction direction="left-to-right" evidence="3">
        <dbReference type="Rhea" id="RHEA:33624"/>
    </physiologicalReaction>
</comment>
<comment type="cofactor">
    <cofactor evidence="2">
        <name>Mg(2+)</name>
        <dbReference type="ChEBI" id="CHEBI:18420"/>
    </cofactor>
    <cofactor evidence="2">
        <name>Mn(2+)</name>
        <dbReference type="ChEBI" id="CHEBI:29035"/>
    </cofactor>
</comment>
<comment type="subcellular location">
    <subcellularLocation>
        <location evidence="3">Mitochondrion</location>
    </subcellularLocation>
</comment>
<comment type="similarity">
    <text evidence="5">Belongs to the ATP-dependent AMP-binding enzyme family.</text>
</comment>
<organism>
    <name type="scientific">Mus musculus</name>
    <name type="common">Mouse</name>
    <dbReference type="NCBI Taxonomy" id="10090"/>
    <lineage>
        <taxon>Eukaryota</taxon>
        <taxon>Metazoa</taxon>
        <taxon>Chordata</taxon>
        <taxon>Craniata</taxon>
        <taxon>Vertebrata</taxon>
        <taxon>Euteleostomi</taxon>
        <taxon>Mammalia</taxon>
        <taxon>Eutheria</taxon>
        <taxon>Euarchontoglires</taxon>
        <taxon>Glires</taxon>
        <taxon>Rodentia</taxon>
        <taxon>Myomorpha</taxon>
        <taxon>Muroidea</taxon>
        <taxon>Muridae</taxon>
        <taxon>Murinae</taxon>
        <taxon>Mus</taxon>
        <taxon>Mus</taxon>
    </lineage>
</organism>
<keyword id="KW-0067">ATP-binding</keyword>
<keyword id="KW-0276">Fatty acid metabolism</keyword>
<keyword id="KW-0436">Ligase</keyword>
<keyword id="KW-0443">Lipid metabolism</keyword>
<keyword id="KW-0460">Magnesium</keyword>
<keyword id="KW-0479">Metal-binding</keyword>
<keyword id="KW-0496">Mitochondrion</keyword>
<keyword id="KW-0547">Nucleotide-binding</keyword>
<keyword id="KW-1185">Reference proteome</keyword>
<keyword id="KW-0809">Transit peptide</keyword>
<dbReference type="EC" id="6.2.1.2" evidence="3"/>
<dbReference type="EMBL" id="AK132127">
    <property type="protein sequence ID" value="BAE20992.1"/>
    <property type="molecule type" value="mRNA"/>
</dbReference>
<dbReference type="EMBL" id="BC048390">
    <property type="protein sequence ID" value="AAH48390.1"/>
    <property type="molecule type" value="mRNA"/>
</dbReference>
<dbReference type="CCDS" id="CCDS21784.1"/>
<dbReference type="RefSeq" id="NP_848501.1">
    <property type="nucleotide sequence ID" value="NM_178414.3"/>
</dbReference>
<dbReference type="SMR" id="Q80W40"/>
<dbReference type="BioGRID" id="231446">
    <property type="interactions" value="1"/>
</dbReference>
<dbReference type="FunCoup" id="Q80W40">
    <property type="interactions" value="57"/>
</dbReference>
<dbReference type="STRING" id="10090.ENSMUSP00000045160"/>
<dbReference type="GlyGen" id="Q80W40">
    <property type="glycosylation" value="1 site, 1 N-linked glycan (1 site)"/>
</dbReference>
<dbReference type="PhosphoSitePlus" id="Q80W40"/>
<dbReference type="jPOST" id="Q80W40"/>
<dbReference type="PaxDb" id="10090-ENSMUSP00000045160"/>
<dbReference type="ProteomicsDB" id="285661"/>
<dbReference type="Antibodypedia" id="59210">
    <property type="antibodies" value="55 antibodies from 12 providers"/>
</dbReference>
<dbReference type="DNASU" id="233801"/>
<dbReference type="Ensembl" id="ENSMUST00000047045.10">
    <property type="protein sequence ID" value="ENSMUSP00000045160.9"/>
    <property type="gene ID" value="ENSMUSG00000047026.10"/>
</dbReference>
<dbReference type="GeneID" id="233801"/>
<dbReference type="KEGG" id="mmu:233801"/>
<dbReference type="UCSC" id="uc009jln.2">
    <property type="organism name" value="mouse"/>
</dbReference>
<dbReference type="AGR" id="MGI:2681844"/>
<dbReference type="CTD" id="341392"/>
<dbReference type="MGI" id="MGI:2681844">
    <property type="gene designation" value="Acsm4"/>
</dbReference>
<dbReference type="VEuPathDB" id="HostDB:ENSMUSG00000047026"/>
<dbReference type="eggNOG" id="KOG1175">
    <property type="taxonomic scope" value="Eukaryota"/>
</dbReference>
<dbReference type="GeneTree" id="ENSGT00940000162316"/>
<dbReference type="HOGENOM" id="CLU_000022_59_10_1"/>
<dbReference type="InParanoid" id="Q80W40"/>
<dbReference type="OMA" id="QLWTPLT"/>
<dbReference type="OrthoDB" id="6614653at2759"/>
<dbReference type="PhylomeDB" id="Q80W40"/>
<dbReference type="TreeFam" id="TF354287"/>
<dbReference type="Reactome" id="R-MMU-177128">
    <property type="pathway name" value="Conjugation of salicylate with glycine"/>
</dbReference>
<dbReference type="Reactome" id="R-MMU-9749641">
    <property type="pathway name" value="Aspirin ADME"/>
</dbReference>
<dbReference type="BioGRID-ORCS" id="233801">
    <property type="hits" value="1 hit in 80 CRISPR screens"/>
</dbReference>
<dbReference type="ChiTaRS" id="Acsm4">
    <property type="organism name" value="mouse"/>
</dbReference>
<dbReference type="PRO" id="PR:Q80W40"/>
<dbReference type="Proteomes" id="UP000000589">
    <property type="component" value="Chromosome 7"/>
</dbReference>
<dbReference type="RNAct" id="Q80W40">
    <property type="molecule type" value="protein"/>
</dbReference>
<dbReference type="Bgee" id="ENSMUSG00000047026">
    <property type="expression patterns" value="Expressed in respiratory tract epithelium and 7 other cell types or tissues"/>
</dbReference>
<dbReference type="GO" id="GO:0005739">
    <property type="term" value="C:mitochondrion"/>
    <property type="evidence" value="ECO:0007005"/>
    <property type="project" value="MGI"/>
</dbReference>
<dbReference type="GO" id="GO:0005524">
    <property type="term" value="F:ATP binding"/>
    <property type="evidence" value="ECO:0007669"/>
    <property type="project" value="UniProtKB-KW"/>
</dbReference>
<dbReference type="GO" id="GO:0102391">
    <property type="term" value="F:decanoate-CoA ligase activity"/>
    <property type="evidence" value="ECO:0000250"/>
    <property type="project" value="UniProtKB"/>
</dbReference>
<dbReference type="GO" id="GO:0015645">
    <property type="term" value="F:fatty acid ligase activity"/>
    <property type="evidence" value="ECO:0000250"/>
    <property type="project" value="UniProtKB"/>
</dbReference>
<dbReference type="GO" id="GO:0004321">
    <property type="term" value="F:fatty-acyl-CoA synthase activity"/>
    <property type="evidence" value="ECO:0007669"/>
    <property type="project" value="Ensembl"/>
</dbReference>
<dbReference type="GO" id="GO:0046872">
    <property type="term" value="F:metal ion binding"/>
    <property type="evidence" value="ECO:0007669"/>
    <property type="project" value="UniProtKB-KW"/>
</dbReference>
<dbReference type="GO" id="GO:0006637">
    <property type="term" value="P:acyl-CoA metabolic process"/>
    <property type="evidence" value="ECO:0007669"/>
    <property type="project" value="Ensembl"/>
</dbReference>
<dbReference type="GO" id="GO:0006631">
    <property type="term" value="P:fatty acid metabolic process"/>
    <property type="evidence" value="ECO:0007669"/>
    <property type="project" value="UniProtKB-KW"/>
</dbReference>
<dbReference type="CDD" id="cd05928">
    <property type="entry name" value="MACS_euk"/>
    <property type="match status" value="1"/>
</dbReference>
<dbReference type="FunFam" id="3.40.50.12780:FF:000007">
    <property type="entry name" value="Acyl-coenzyme A synthetase ACSM2A, mitochondrial"/>
    <property type="match status" value="1"/>
</dbReference>
<dbReference type="FunFam" id="3.30.300.30:FF:000005">
    <property type="entry name" value="Acyl-coenzyme A synthetase ACSM5, mitochondrial"/>
    <property type="match status" value="1"/>
</dbReference>
<dbReference type="Gene3D" id="3.30.300.30">
    <property type="match status" value="1"/>
</dbReference>
<dbReference type="Gene3D" id="3.40.50.12780">
    <property type="entry name" value="N-terminal domain of ligase-like"/>
    <property type="match status" value="1"/>
</dbReference>
<dbReference type="InterPro" id="IPR025110">
    <property type="entry name" value="AMP-bd_C"/>
</dbReference>
<dbReference type="InterPro" id="IPR045851">
    <property type="entry name" value="AMP-bd_C_sf"/>
</dbReference>
<dbReference type="InterPro" id="IPR020845">
    <property type="entry name" value="AMP-binding_CS"/>
</dbReference>
<dbReference type="InterPro" id="IPR000873">
    <property type="entry name" value="AMP-dep_synth/lig_dom"/>
</dbReference>
<dbReference type="InterPro" id="IPR042099">
    <property type="entry name" value="ANL_N_sf"/>
</dbReference>
<dbReference type="InterPro" id="IPR051087">
    <property type="entry name" value="Mitochondrial_ACSM"/>
</dbReference>
<dbReference type="PANTHER" id="PTHR43605">
    <property type="entry name" value="ACYL-COENZYME A SYNTHETASE"/>
    <property type="match status" value="1"/>
</dbReference>
<dbReference type="PANTHER" id="PTHR43605:SF8">
    <property type="entry name" value="ACYL-COENZYME A SYNTHETASE ACSM4, MITOCHONDRIAL"/>
    <property type="match status" value="1"/>
</dbReference>
<dbReference type="Pfam" id="PF00501">
    <property type="entry name" value="AMP-binding"/>
    <property type="match status" value="1"/>
</dbReference>
<dbReference type="Pfam" id="PF13193">
    <property type="entry name" value="AMP-binding_C"/>
    <property type="match status" value="1"/>
</dbReference>
<dbReference type="SUPFAM" id="SSF56801">
    <property type="entry name" value="Acetyl-CoA synthetase-like"/>
    <property type="match status" value="1"/>
</dbReference>
<dbReference type="PROSITE" id="PS00455">
    <property type="entry name" value="AMP_BINDING"/>
    <property type="match status" value="1"/>
</dbReference>
<accession>Q80W40</accession>
<proteinExistence type="evidence at transcript level"/>
<reference key="1">
    <citation type="journal article" date="2005" name="Science">
        <title>The transcriptional landscape of the mammalian genome.</title>
        <authorList>
            <person name="Carninci P."/>
            <person name="Kasukawa T."/>
            <person name="Katayama S."/>
            <person name="Gough J."/>
            <person name="Frith M.C."/>
            <person name="Maeda N."/>
            <person name="Oyama R."/>
            <person name="Ravasi T."/>
            <person name="Lenhard B."/>
            <person name="Wells C."/>
            <person name="Kodzius R."/>
            <person name="Shimokawa K."/>
            <person name="Bajic V.B."/>
            <person name="Brenner S.E."/>
            <person name="Batalov S."/>
            <person name="Forrest A.R."/>
            <person name="Zavolan M."/>
            <person name="Davis M.J."/>
            <person name="Wilming L.G."/>
            <person name="Aidinis V."/>
            <person name="Allen J.E."/>
            <person name="Ambesi-Impiombato A."/>
            <person name="Apweiler R."/>
            <person name="Aturaliya R.N."/>
            <person name="Bailey T.L."/>
            <person name="Bansal M."/>
            <person name="Baxter L."/>
            <person name="Beisel K.W."/>
            <person name="Bersano T."/>
            <person name="Bono H."/>
            <person name="Chalk A.M."/>
            <person name="Chiu K.P."/>
            <person name="Choudhary V."/>
            <person name="Christoffels A."/>
            <person name="Clutterbuck D.R."/>
            <person name="Crowe M.L."/>
            <person name="Dalla E."/>
            <person name="Dalrymple B.P."/>
            <person name="de Bono B."/>
            <person name="Della Gatta G."/>
            <person name="di Bernardo D."/>
            <person name="Down T."/>
            <person name="Engstrom P."/>
            <person name="Fagiolini M."/>
            <person name="Faulkner G."/>
            <person name="Fletcher C.F."/>
            <person name="Fukushima T."/>
            <person name="Furuno M."/>
            <person name="Futaki S."/>
            <person name="Gariboldi M."/>
            <person name="Georgii-Hemming P."/>
            <person name="Gingeras T.R."/>
            <person name="Gojobori T."/>
            <person name="Green R.E."/>
            <person name="Gustincich S."/>
            <person name="Harbers M."/>
            <person name="Hayashi Y."/>
            <person name="Hensch T.K."/>
            <person name="Hirokawa N."/>
            <person name="Hill D."/>
            <person name="Huminiecki L."/>
            <person name="Iacono M."/>
            <person name="Ikeo K."/>
            <person name="Iwama A."/>
            <person name="Ishikawa T."/>
            <person name="Jakt M."/>
            <person name="Kanapin A."/>
            <person name="Katoh M."/>
            <person name="Kawasawa Y."/>
            <person name="Kelso J."/>
            <person name="Kitamura H."/>
            <person name="Kitano H."/>
            <person name="Kollias G."/>
            <person name="Krishnan S.P."/>
            <person name="Kruger A."/>
            <person name="Kummerfeld S.K."/>
            <person name="Kurochkin I.V."/>
            <person name="Lareau L.F."/>
            <person name="Lazarevic D."/>
            <person name="Lipovich L."/>
            <person name="Liu J."/>
            <person name="Liuni S."/>
            <person name="McWilliam S."/>
            <person name="Madan Babu M."/>
            <person name="Madera M."/>
            <person name="Marchionni L."/>
            <person name="Matsuda H."/>
            <person name="Matsuzawa S."/>
            <person name="Miki H."/>
            <person name="Mignone F."/>
            <person name="Miyake S."/>
            <person name="Morris K."/>
            <person name="Mottagui-Tabar S."/>
            <person name="Mulder N."/>
            <person name="Nakano N."/>
            <person name="Nakauchi H."/>
            <person name="Ng P."/>
            <person name="Nilsson R."/>
            <person name="Nishiguchi S."/>
            <person name="Nishikawa S."/>
            <person name="Nori F."/>
            <person name="Ohara O."/>
            <person name="Okazaki Y."/>
            <person name="Orlando V."/>
            <person name="Pang K.C."/>
            <person name="Pavan W.J."/>
            <person name="Pavesi G."/>
            <person name="Pesole G."/>
            <person name="Petrovsky N."/>
            <person name="Piazza S."/>
            <person name="Reed J."/>
            <person name="Reid J.F."/>
            <person name="Ring B.Z."/>
            <person name="Ringwald M."/>
            <person name="Rost B."/>
            <person name="Ruan Y."/>
            <person name="Salzberg S.L."/>
            <person name="Sandelin A."/>
            <person name="Schneider C."/>
            <person name="Schoenbach C."/>
            <person name="Sekiguchi K."/>
            <person name="Semple C.A."/>
            <person name="Seno S."/>
            <person name="Sessa L."/>
            <person name="Sheng Y."/>
            <person name="Shibata Y."/>
            <person name="Shimada H."/>
            <person name="Shimada K."/>
            <person name="Silva D."/>
            <person name="Sinclair B."/>
            <person name="Sperling S."/>
            <person name="Stupka E."/>
            <person name="Sugiura K."/>
            <person name="Sultana R."/>
            <person name="Takenaka Y."/>
            <person name="Taki K."/>
            <person name="Tammoja K."/>
            <person name="Tan S.L."/>
            <person name="Tang S."/>
            <person name="Taylor M.S."/>
            <person name="Tegner J."/>
            <person name="Teichmann S.A."/>
            <person name="Ueda H.R."/>
            <person name="van Nimwegen E."/>
            <person name="Verardo R."/>
            <person name="Wei C.L."/>
            <person name="Yagi K."/>
            <person name="Yamanishi H."/>
            <person name="Zabarovsky E."/>
            <person name="Zhu S."/>
            <person name="Zimmer A."/>
            <person name="Hide W."/>
            <person name="Bult C."/>
            <person name="Grimmond S.M."/>
            <person name="Teasdale R.D."/>
            <person name="Liu E.T."/>
            <person name="Brusic V."/>
            <person name="Quackenbush J."/>
            <person name="Wahlestedt C."/>
            <person name="Mattick J.S."/>
            <person name="Hume D.A."/>
            <person name="Kai C."/>
            <person name="Sasaki D."/>
            <person name="Tomaru Y."/>
            <person name="Fukuda S."/>
            <person name="Kanamori-Katayama M."/>
            <person name="Suzuki M."/>
            <person name="Aoki J."/>
            <person name="Arakawa T."/>
            <person name="Iida J."/>
            <person name="Imamura K."/>
            <person name="Itoh M."/>
            <person name="Kato T."/>
            <person name="Kawaji H."/>
            <person name="Kawagashira N."/>
            <person name="Kawashima T."/>
            <person name="Kojima M."/>
            <person name="Kondo S."/>
            <person name="Konno H."/>
            <person name="Nakano K."/>
            <person name="Ninomiya N."/>
            <person name="Nishio T."/>
            <person name="Okada M."/>
            <person name="Plessy C."/>
            <person name="Shibata K."/>
            <person name="Shiraki T."/>
            <person name="Suzuki S."/>
            <person name="Tagami M."/>
            <person name="Waki K."/>
            <person name="Watahiki A."/>
            <person name="Okamura-Oho Y."/>
            <person name="Suzuki H."/>
            <person name="Kawai J."/>
            <person name="Hayashizaki Y."/>
        </authorList>
    </citation>
    <scope>NUCLEOTIDE SEQUENCE [LARGE SCALE MRNA]</scope>
    <source>
        <strain>C57BL/6J</strain>
        <tissue>Head</tissue>
    </source>
</reference>
<reference key="2">
    <citation type="journal article" date="2004" name="Genome Res.">
        <title>The status, quality, and expansion of the NIH full-length cDNA project: the Mammalian Gene Collection (MGC).</title>
        <authorList>
            <consortium name="The MGC Project Team"/>
        </authorList>
    </citation>
    <scope>NUCLEOTIDE SEQUENCE [LARGE SCALE MRNA]</scope>
    <source>
        <strain>C57BL/6J</strain>
        <tissue>Olfactory epithelium</tissue>
    </source>
</reference>
<evidence type="ECO:0000250" key="1"/>
<evidence type="ECO:0000250" key="2">
    <source>
        <dbReference type="UniProtKB" id="Q08AH1"/>
    </source>
</evidence>
<evidence type="ECO:0000250" key="3">
    <source>
        <dbReference type="UniProtKB" id="Q7TN78"/>
    </source>
</evidence>
<evidence type="ECO:0000255" key="4"/>
<evidence type="ECO:0000305" key="5"/>